<keyword id="KW-0963">Cytoplasm</keyword>
<keyword id="KW-0444">Lipid biosynthesis</keyword>
<keyword id="KW-0443">Lipid metabolism</keyword>
<keyword id="KW-0520">NAD</keyword>
<keyword id="KW-0521">NADP</keyword>
<keyword id="KW-0547">Nucleotide-binding</keyword>
<keyword id="KW-0560">Oxidoreductase</keyword>
<keyword id="KW-0594">Phospholipid biosynthesis</keyword>
<keyword id="KW-1208">Phospholipid metabolism</keyword>
<proteinExistence type="inferred from homology"/>
<comment type="function">
    <text evidence="1">Catalyzes the reduction of the glycolytic intermediate dihydroxyacetone phosphate (DHAP) to sn-glycerol 3-phosphate (G3P), the key precursor for phospholipid synthesis.</text>
</comment>
<comment type="catalytic activity">
    <reaction evidence="1">
        <text>sn-glycerol 3-phosphate + NAD(+) = dihydroxyacetone phosphate + NADH + H(+)</text>
        <dbReference type="Rhea" id="RHEA:11092"/>
        <dbReference type="ChEBI" id="CHEBI:15378"/>
        <dbReference type="ChEBI" id="CHEBI:57540"/>
        <dbReference type="ChEBI" id="CHEBI:57597"/>
        <dbReference type="ChEBI" id="CHEBI:57642"/>
        <dbReference type="ChEBI" id="CHEBI:57945"/>
        <dbReference type="EC" id="1.1.1.94"/>
    </reaction>
    <physiologicalReaction direction="right-to-left" evidence="1">
        <dbReference type="Rhea" id="RHEA:11094"/>
    </physiologicalReaction>
</comment>
<comment type="catalytic activity">
    <reaction evidence="1">
        <text>sn-glycerol 3-phosphate + NADP(+) = dihydroxyacetone phosphate + NADPH + H(+)</text>
        <dbReference type="Rhea" id="RHEA:11096"/>
        <dbReference type="ChEBI" id="CHEBI:15378"/>
        <dbReference type="ChEBI" id="CHEBI:57597"/>
        <dbReference type="ChEBI" id="CHEBI:57642"/>
        <dbReference type="ChEBI" id="CHEBI:57783"/>
        <dbReference type="ChEBI" id="CHEBI:58349"/>
        <dbReference type="EC" id="1.1.1.94"/>
    </reaction>
    <physiologicalReaction direction="right-to-left" evidence="1">
        <dbReference type="Rhea" id="RHEA:11098"/>
    </physiologicalReaction>
</comment>
<comment type="pathway">
    <text evidence="1">Membrane lipid metabolism; glycerophospholipid metabolism.</text>
</comment>
<comment type="subcellular location">
    <subcellularLocation>
        <location evidence="1">Cytoplasm</location>
    </subcellularLocation>
</comment>
<comment type="similarity">
    <text evidence="1">Belongs to the NAD-dependent glycerol-3-phosphate dehydrogenase family.</text>
</comment>
<name>GPDA_BORBR</name>
<sequence length="351" mass="35696">MSQARPATLRVAVLGAGSWGTALAAAASRRHPTVLWARDGAQAQAMAARHENTRYLPGVALPPALQVSADLAQALAHLAHDPAHALIILGVPVAGMTPLCTELAARLPALGLQAVPLVWTCKGFEEQTARLPHETVQAALGAMPGLAAGVLSGPSFAREVAQGLPVALTVASESSAVRDAVTTALHGAAVRIYASTDVVGVEVGGALKNVIAVACGICDGLALGTNARAALITRGLAEMARFGAALGAQQETFAGLTGLGDLVLTATGELSRNRRVGLEIGAGRKLADILASGMTAEGVRCARAARDRARALNIELPITEAVCAVLFEGLSPMTAVSALLAREARPESPTP</sequence>
<feature type="chain" id="PRO_0000137930" description="Glycerol-3-phosphate dehydrogenase [NAD(P)+]">
    <location>
        <begin position="1"/>
        <end position="351"/>
    </location>
</feature>
<feature type="active site" description="Proton acceptor" evidence="1">
    <location>
        <position position="208"/>
    </location>
</feature>
<feature type="binding site" evidence="1">
    <location>
        <position position="18"/>
    </location>
    <ligand>
        <name>NADPH</name>
        <dbReference type="ChEBI" id="CHEBI:57783"/>
    </ligand>
</feature>
<feature type="binding site" evidence="1">
    <location>
        <position position="19"/>
    </location>
    <ligand>
        <name>NADPH</name>
        <dbReference type="ChEBI" id="CHEBI:57783"/>
    </ligand>
</feature>
<feature type="binding site" evidence="1">
    <location>
        <position position="38"/>
    </location>
    <ligand>
        <name>NADPH</name>
        <dbReference type="ChEBI" id="CHEBI:57783"/>
    </ligand>
</feature>
<feature type="binding site" evidence="1">
    <location>
        <position position="122"/>
    </location>
    <ligand>
        <name>NADPH</name>
        <dbReference type="ChEBI" id="CHEBI:57783"/>
    </ligand>
</feature>
<feature type="binding site" evidence="1">
    <location>
        <position position="122"/>
    </location>
    <ligand>
        <name>sn-glycerol 3-phosphate</name>
        <dbReference type="ChEBI" id="CHEBI:57597"/>
    </ligand>
</feature>
<feature type="binding site" evidence="1">
    <location>
        <position position="153"/>
    </location>
    <ligand>
        <name>sn-glycerol 3-phosphate</name>
        <dbReference type="ChEBI" id="CHEBI:57597"/>
    </ligand>
</feature>
<feature type="binding site" evidence="1">
    <location>
        <position position="155"/>
    </location>
    <ligand>
        <name>sn-glycerol 3-phosphate</name>
        <dbReference type="ChEBI" id="CHEBI:57597"/>
    </ligand>
</feature>
<feature type="binding site" evidence="1">
    <location>
        <position position="157"/>
    </location>
    <ligand>
        <name>NADPH</name>
        <dbReference type="ChEBI" id="CHEBI:57783"/>
    </ligand>
</feature>
<feature type="binding site" evidence="1">
    <location>
        <position position="208"/>
    </location>
    <ligand>
        <name>sn-glycerol 3-phosphate</name>
        <dbReference type="ChEBI" id="CHEBI:57597"/>
    </ligand>
</feature>
<feature type="binding site" evidence="1">
    <location>
        <position position="261"/>
    </location>
    <ligand>
        <name>sn-glycerol 3-phosphate</name>
        <dbReference type="ChEBI" id="CHEBI:57597"/>
    </ligand>
</feature>
<feature type="binding site" evidence="1">
    <location>
        <position position="271"/>
    </location>
    <ligand>
        <name>sn-glycerol 3-phosphate</name>
        <dbReference type="ChEBI" id="CHEBI:57597"/>
    </ligand>
</feature>
<feature type="binding site" evidence="1">
    <location>
        <position position="272"/>
    </location>
    <ligand>
        <name>NADPH</name>
        <dbReference type="ChEBI" id="CHEBI:57783"/>
    </ligand>
</feature>
<feature type="binding site" evidence="1">
    <location>
        <position position="272"/>
    </location>
    <ligand>
        <name>sn-glycerol 3-phosphate</name>
        <dbReference type="ChEBI" id="CHEBI:57597"/>
    </ligand>
</feature>
<feature type="binding site" evidence="1">
    <location>
        <position position="273"/>
    </location>
    <ligand>
        <name>sn-glycerol 3-phosphate</name>
        <dbReference type="ChEBI" id="CHEBI:57597"/>
    </ligand>
</feature>
<feature type="binding site" evidence="1">
    <location>
        <position position="297"/>
    </location>
    <ligand>
        <name>NADPH</name>
        <dbReference type="ChEBI" id="CHEBI:57783"/>
    </ligand>
</feature>
<gene>
    <name evidence="1" type="primary">gpsA</name>
    <name type="ordered locus">BB0294</name>
</gene>
<protein>
    <recommendedName>
        <fullName evidence="1">Glycerol-3-phosphate dehydrogenase [NAD(P)+]</fullName>
        <ecNumber evidence="1">1.1.1.94</ecNumber>
    </recommendedName>
    <alternativeName>
        <fullName evidence="1">NAD(P)(+)-dependent glycerol-3-phosphate dehydrogenase</fullName>
    </alternativeName>
    <alternativeName>
        <fullName evidence="1">NAD(P)H-dependent dihydroxyacetone-phosphate reductase</fullName>
    </alternativeName>
</protein>
<dbReference type="EC" id="1.1.1.94" evidence="1"/>
<dbReference type="EMBL" id="BX640437">
    <property type="protein sequence ID" value="CAE30792.1"/>
    <property type="molecule type" value="Genomic_DNA"/>
</dbReference>
<dbReference type="RefSeq" id="WP_010925756.1">
    <property type="nucleotide sequence ID" value="NC_002927.3"/>
</dbReference>
<dbReference type="SMR" id="Q7WQN6"/>
<dbReference type="KEGG" id="bbr:BB0294"/>
<dbReference type="eggNOG" id="COG0240">
    <property type="taxonomic scope" value="Bacteria"/>
</dbReference>
<dbReference type="HOGENOM" id="CLU_033449_0_2_4"/>
<dbReference type="UniPathway" id="UPA00940"/>
<dbReference type="Proteomes" id="UP000001027">
    <property type="component" value="Chromosome"/>
</dbReference>
<dbReference type="GO" id="GO:0005829">
    <property type="term" value="C:cytosol"/>
    <property type="evidence" value="ECO:0007669"/>
    <property type="project" value="TreeGrafter"/>
</dbReference>
<dbReference type="GO" id="GO:0047952">
    <property type="term" value="F:glycerol-3-phosphate dehydrogenase [NAD(P)+] activity"/>
    <property type="evidence" value="ECO:0007669"/>
    <property type="project" value="UniProtKB-UniRule"/>
</dbReference>
<dbReference type="GO" id="GO:0051287">
    <property type="term" value="F:NAD binding"/>
    <property type="evidence" value="ECO:0007669"/>
    <property type="project" value="InterPro"/>
</dbReference>
<dbReference type="GO" id="GO:0005975">
    <property type="term" value="P:carbohydrate metabolic process"/>
    <property type="evidence" value="ECO:0007669"/>
    <property type="project" value="InterPro"/>
</dbReference>
<dbReference type="GO" id="GO:0046167">
    <property type="term" value="P:glycerol-3-phosphate biosynthetic process"/>
    <property type="evidence" value="ECO:0007669"/>
    <property type="project" value="UniProtKB-UniRule"/>
</dbReference>
<dbReference type="GO" id="GO:0046168">
    <property type="term" value="P:glycerol-3-phosphate catabolic process"/>
    <property type="evidence" value="ECO:0007669"/>
    <property type="project" value="InterPro"/>
</dbReference>
<dbReference type="GO" id="GO:0006650">
    <property type="term" value="P:glycerophospholipid metabolic process"/>
    <property type="evidence" value="ECO:0007669"/>
    <property type="project" value="UniProtKB-UniRule"/>
</dbReference>
<dbReference type="GO" id="GO:0008654">
    <property type="term" value="P:phospholipid biosynthetic process"/>
    <property type="evidence" value="ECO:0007669"/>
    <property type="project" value="UniProtKB-KW"/>
</dbReference>
<dbReference type="FunFam" id="1.10.1040.10:FF:000001">
    <property type="entry name" value="Glycerol-3-phosphate dehydrogenase [NAD(P)+]"/>
    <property type="match status" value="1"/>
</dbReference>
<dbReference type="FunFam" id="3.40.50.720:FF:000019">
    <property type="entry name" value="Glycerol-3-phosphate dehydrogenase [NAD(P)+]"/>
    <property type="match status" value="1"/>
</dbReference>
<dbReference type="Gene3D" id="1.10.1040.10">
    <property type="entry name" value="N-(1-d-carboxylethyl)-l-norvaline Dehydrogenase, domain 2"/>
    <property type="match status" value="1"/>
</dbReference>
<dbReference type="Gene3D" id="3.40.50.720">
    <property type="entry name" value="NAD(P)-binding Rossmann-like Domain"/>
    <property type="match status" value="1"/>
</dbReference>
<dbReference type="HAMAP" id="MF_00394">
    <property type="entry name" value="NAD_Glyc3P_dehydrog"/>
    <property type="match status" value="1"/>
</dbReference>
<dbReference type="InterPro" id="IPR008927">
    <property type="entry name" value="6-PGluconate_DH-like_C_sf"/>
</dbReference>
<dbReference type="InterPro" id="IPR013328">
    <property type="entry name" value="6PGD_dom2"/>
</dbReference>
<dbReference type="InterPro" id="IPR006168">
    <property type="entry name" value="G3P_DH_NAD-dep"/>
</dbReference>
<dbReference type="InterPro" id="IPR006109">
    <property type="entry name" value="G3P_DH_NAD-dep_C"/>
</dbReference>
<dbReference type="InterPro" id="IPR011128">
    <property type="entry name" value="G3P_DH_NAD-dep_N"/>
</dbReference>
<dbReference type="InterPro" id="IPR036291">
    <property type="entry name" value="NAD(P)-bd_dom_sf"/>
</dbReference>
<dbReference type="NCBIfam" id="NF000940">
    <property type="entry name" value="PRK00094.1-2"/>
    <property type="match status" value="1"/>
</dbReference>
<dbReference type="NCBIfam" id="NF000942">
    <property type="entry name" value="PRK00094.1-4"/>
    <property type="match status" value="1"/>
</dbReference>
<dbReference type="PANTHER" id="PTHR11728">
    <property type="entry name" value="GLYCEROL-3-PHOSPHATE DEHYDROGENASE"/>
    <property type="match status" value="1"/>
</dbReference>
<dbReference type="PANTHER" id="PTHR11728:SF1">
    <property type="entry name" value="GLYCEROL-3-PHOSPHATE DEHYDROGENASE [NAD(+)] 2, CHLOROPLASTIC"/>
    <property type="match status" value="1"/>
</dbReference>
<dbReference type="Pfam" id="PF07479">
    <property type="entry name" value="NAD_Gly3P_dh_C"/>
    <property type="match status" value="1"/>
</dbReference>
<dbReference type="Pfam" id="PF01210">
    <property type="entry name" value="NAD_Gly3P_dh_N"/>
    <property type="match status" value="1"/>
</dbReference>
<dbReference type="PIRSF" id="PIRSF000114">
    <property type="entry name" value="Glycerol-3-P_dh"/>
    <property type="match status" value="1"/>
</dbReference>
<dbReference type="PRINTS" id="PR00077">
    <property type="entry name" value="GPDHDRGNASE"/>
</dbReference>
<dbReference type="SUPFAM" id="SSF48179">
    <property type="entry name" value="6-phosphogluconate dehydrogenase C-terminal domain-like"/>
    <property type="match status" value="1"/>
</dbReference>
<dbReference type="SUPFAM" id="SSF51735">
    <property type="entry name" value="NAD(P)-binding Rossmann-fold domains"/>
    <property type="match status" value="1"/>
</dbReference>
<dbReference type="PROSITE" id="PS00957">
    <property type="entry name" value="NAD_G3PDH"/>
    <property type="match status" value="1"/>
</dbReference>
<organism>
    <name type="scientific">Bordetella bronchiseptica (strain ATCC BAA-588 / NCTC 13252 / RB50)</name>
    <name type="common">Alcaligenes bronchisepticus</name>
    <dbReference type="NCBI Taxonomy" id="257310"/>
    <lineage>
        <taxon>Bacteria</taxon>
        <taxon>Pseudomonadati</taxon>
        <taxon>Pseudomonadota</taxon>
        <taxon>Betaproteobacteria</taxon>
        <taxon>Burkholderiales</taxon>
        <taxon>Alcaligenaceae</taxon>
        <taxon>Bordetella</taxon>
    </lineage>
</organism>
<reference key="1">
    <citation type="journal article" date="2003" name="Nat. Genet.">
        <title>Comparative analysis of the genome sequences of Bordetella pertussis, Bordetella parapertussis and Bordetella bronchiseptica.</title>
        <authorList>
            <person name="Parkhill J."/>
            <person name="Sebaihia M."/>
            <person name="Preston A."/>
            <person name="Murphy L.D."/>
            <person name="Thomson N.R."/>
            <person name="Harris D.E."/>
            <person name="Holden M.T.G."/>
            <person name="Churcher C.M."/>
            <person name="Bentley S.D."/>
            <person name="Mungall K.L."/>
            <person name="Cerdeno-Tarraga A.-M."/>
            <person name="Temple L."/>
            <person name="James K.D."/>
            <person name="Harris B."/>
            <person name="Quail M.A."/>
            <person name="Achtman M."/>
            <person name="Atkin R."/>
            <person name="Baker S."/>
            <person name="Basham D."/>
            <person name="Bason N."/>
            <person name="Cherevach I."/>
            <person name="Chillingworth T."/>
            <person name="Collins M."/>
            <person name="Cronin A."/>
            <person name="Davis P."/>
            <person name="Doggett J."/>
            <person name="Feltwell T."/>
            <person name="Goble A."/>
            <person name="Hamlin N."/>
            <person name="Hauser H."/>
            <person name="Holroyd S."/>
            <person name="Jagels K."/>
            <person name="Leather S."/>
            <person name="Moule S."/>
            <person name="Norberczak H."/>
            <person name="O'Neil S."/>
            <person name="Ormond D."/>
            <person name="Price C."/>
            <person name="Rabbinowitsch E."/>
            <person name="Rutter S."/>
            <person name="Sanders M."/>
            <person name="Saunders D."/>
            <person name="Seeger K."/>
            <person name="Sharp S."/>
            <person name="Simmonds M."/>
            <person name="Skelton J."/>
            <person name="Squares R."/>
            <person name="Squares S."/>
            <person name="Stevens K."/>
            <person name="Unwin L."/>
            <person name="Whitehead S."/>
            <person name="Barrell B.G."/>
            <person name="Maskell D.J."/>
        </authorList>
    </citation>
    <scope>NUCLEOTIDE SEQUENCE [LARGE SCALE GENOMIC DNA]</scope>
    <source>
        <strain>ATCC BAA-588 / NCTC 13252 / RB50</strain>
    </source>
</reference>
<accession>Q7WQN6</accession>
<evidence type="ECO:0000255" key="1">
    <source>
        <dbReference type="HAMAP-Rule" id="MF_00394"/>
    </source>
</evidence>